<keyword id="KW-0997">Cell inner membrane</keyword>
<keyword id="KW-1003">Cell membrane</keyword>
<keyword id="KW-0472">Membrane</keyword>
<keyword id="KW-0520">NAD</keyword>
<keyword id="KW-0874">Quinone</keyword>
<keyword id="KW-1278">Translocase</keyword>
<keyword id="KW-0812">Transmembrane</keyword>
<keyword id="KW-1133">Transmembrane helix</keyword>
<keyword id="KW-0813">Transport</keyword>
<keyword id="KW-0830">Ubiquinone</keyword>
<gene>
    <name evidence="1" type="primary">nuoK</name>
    <name type="ordered locus">EcHS_A2428</name>
</gene>
<organism>
    <name type="scientific">Escherichia coli O9:H4 (strain HS)</name>
    <dbReference type="NCBI Taxonomy" id="331112"/>
    <lineage>
        <taxon>Bacteria</taxon>
        <taxon>Pseudomonadati</taxon>
        <taxon>Pseudomonadota</taxon>
        <taxon>Gammaproteobacteria</taxon>
        <taxon>Enterobacterales</taxon>
        <taxon>Enterobacteriaceae</taxon>
        <taxon>Escherichia</taxon>
    </lineage>
</organism>
<name>NUOK_ECOHS</name>
<feature type="chain" id="PRO_0000390059" description="NADH-quinone oxidoreductase subunit K">
    <location>
        <begin position="1"/>
        <end position="100"/>
    </location>
</feature>
<feature type="transmembrane region" description="Helical" evidence="1">
    <location>
        <begin position="4"/>
        <end position="24"/>
    </location>
</feature>
<feature type="transmembrane region" description="Helical" evidence="1">
    <location>
        <begin position="28"/>
        <end position="48"/>
    </location>
</feature>
<feature type="transmembrane region" description="Helical" evidence="1">
    <location>
        <begin position="60"/>
        <end position="80"/>
    </location>
</feature>
<accession>A8A2E8</accession>
<reference key="1">
    <citation type="journal article" date="2008" name="J. Bacteriol.">
        <title>The pangenome structure of Escherichia coli: comparative genomic analysis of E. coli commensal and pathogenic isolates.</title>
        <authorList>
            <person name="Rasko D.A."/>
            <person name="Rosovitz M.J."/>
            <person name="Myers G.S.A."/>
            <person name="Mongodin E.F."/>
            <person name="Fricke W.F."/>
            <person name="Gajer P."/>
            <person name="Crabtree J."/>
            <person name="Sebaihia M."/>
            <person name="Thomson N.R."/>
            <person name="Chaudhuri R."/>
            <person name="Henderson I.R."/>
            <person name="Sperandio V."/>
            <person name="Ravel J."/>
        </authorList>
    </citation>
    <scope>NUCLEOTIDE SEQUENCE [LARGE SCALE GENOMIC DNA]</scope>
    <source>
        <strain>HS</strain>
    </source>
</reference>
<dbReference type="EC" id="7.1.1.-" evidence="1"/>
<dbReference type="EMBL" id="CP000802">
    <property type="protein sequence ID" value="ABV06702.1"/>
    <property type="molecule type" value="Genomic_DNA"/>
</dbReference>
<dbReference type="RefSeq" id="WP_000612644.1">
    <property type="nucleotide sequence ID" value="NC_009800.1"/>
</dbReference>
<dbReference type="SMR" id="A8A2E8"/>
<dbReference type="GeneID" id="93033872"/>
<dbReference type="KEGG" id="ecx:EcHS_A2428"/>
<dbReference type="HOGENOM" id="CLU_144724_0_1_6"/>
<dbReference type="GO" id="GO:0030964">
    <property type="term" value="C:NADH dehydrogenase complex"/>
    <property type="evidence" value="ECO:0007669"/>
    <property type="project" value="TreeGrafter"/>
</dbReference>
<dbReference type="GO" id="GO:0005886">
    <property type="term" value="C:plasma membrane"/>
    <property type="evidence" value="ECO:0007669"/>
    <property type="project" value="UniProtKB-SubCell"/>
</dbReference>
<dbReference type="GO" id="GO:0050136">
    <property type="term" value="F:NADH:ubiquinone reductase (non-electrogenic) activity"/>
    <property type="evidence" value="ECO:0007669"/>
    <property type="project" value="UniProtKB-UniRule"/>
</dbReference>
<dbReference type="GO" id="GO:0048038">
    <property type="term" value="F:quinone binding"/>
    <property type="evidence" value="ECO:0007669"/>
    <property type="project" value="UniProtKB-KW"/>
</dbReference>
<dbReference type="GO" id="GO:0042773">
    <property type="term" value="P:ATP synthesis coupled electron transport"/>
    <property type="evidence" value="ECO:0007669"/>
    <property type="project" value="InterPro"/>
</dbReference>
<dbReference type="FunFam" id="1.10.287.3510:FF:000001">
    <property type="entry name" value="NADH-quinone oxidoreductase subunit K"/>
    <property type="match status" value="1"/>
</dbReference>
<dbReference type="Gene3D" id="1.10.287.3510">
    <property type="match status" value="1"/>
</dbReference>
<dbReference type="HAMAP" id="MF_01456">
    <property type="entry name" value="NDH1_NuoK"/>
    <property type="match status" value="1"/>
</dbReference>
<dbReference type="InterPro" id="IPR001133">
    <property type="entry name" value="NADH_UbQ_OxRdtase_chain4L/K"/>
</dbReference>
<dbReference type="InterPro" id="IPR039428">
    <property type="entry name" value="NUOK/Mnh_C1-like"/>
</dbReference>
<dbReference type="NCBIfam" id="NF004319">
    <property type="entry name" value="PRK05715.1-1"/>
    <property type="match status" value="1"/>
</dbReference>
<dbReference type="NCBIfam" id="NF004320">
    <property type="entry name" value="PRK05715.1-2"/>
    <property type="match status" value="1"/>
</dbReference>
<dbReference type="PANTHER" id="PTHR11434:SF16">
    <property type="entry name" value="NADH-UBIQUINONE OXIDOREDUCTASE CHAIN 4L"/>
    <property type="match status" value="1"/>
</dbReference>
<dbReference type="PANTHER" id="PTHR11434">
    <property type="entry name" value="NADH-UBIQUINONE OXIDOREDUCTASE SUBUNIT ND4L"/>
    <property type="match status" value="1"/>
</dbReference>
<dbReference type="Pfam" id="PF00420">
    <property type="entry name" value="Oxidored_q2"/>
    <property type="match status" value="1"/>
</dbReference>
<comment type="function">
    <text evidence="1">NDH-1 shuttles electrons from NADH, via FMN and iron-sulfur (Fe-S) centers, to quinones in the respiratory chain. The immediate electron acceptor for the enzyme in this species is believed to be ubiquinone. Couples the redox reaction to proton translocation (for every two electrons transferred, four hydrogen ions are translocated across the cytoplasmic membrane), and thus conserves the redox energy in a proton gradient.</text>
</comment>
<comment type="catalytic activity">
    <reaction evidence="1">
        <text>a quinone + NADH + 5 H(+)(in) = a quinol + NAD(+) + 4 H(+)(out)</text>
        <dbReference type="Rhea" id="RHEA:57888"/>
        <dbReference type="ChEBI" id="CHEBI:15378"/>
        <dbReference type="ChEBI" id="CHEBI:24646"/>
        <dbReference type="ChEBI" id="CHEBI:57540"/>
        <dbReference type="ChEBI" id="CHEBI:57945"/>
        <dbReference type="ChEBI" id="CHEBI:132124"/>
    </reaction>
</comment>
<comment type="subunit">
    <text evidence="1">NDH-1 is composed of 13 different subunits. Subunits NuoA, H, J, K, L, M, N constitute the membrane sector of the complex.</text>
</comment>
<comment type="subcellular location">
    <subcellularLocation>
        <location evidence="1">Cell inner membrane</location>
        <topology evidence="1">Multi-pass membrane protein</topology>
    </subcellularLocation>
</comment>
<comment type="similarity">
    <text evidence="1">Belongs to the complex I subunit 4L family.</text>
</comment>
<evidence type="ECO:0000255" key="1">
    <source>
        <dbReference type="HAMAP-Rule" id="MF_01456"/>
    </source>
</evidence>
<proteinExistence type="inferred from homology"/>
<protein>
    <recommendedName>
        <fullName evidence="1">NADH-quinone oxidoreductase subunit K</fullName>
        <ecNumber evidence="1">7.1.1.-</ecNumber>
    </recommendedName>
    <alternativeName>
        <fullName evidence="1">NADH dehydrogenase I subunit K</fullName>
    </alternativeName>
    <alternativeName>
        <fullName evidence="1">NDH-1 subunit K</fullName>
    </alternativeName>
</protein>
<sequence length="100" mass="10845">MIPLQHGLILAAILFVLGLTGLVIRRNLLFMLIGLEIMINASALAFVVAGSYWGQTDGQVMYILAISLAAAEASIGLALLLQLHRRRQNLNIDSVSEMRG</sequence>